<organism>
    <name type="scientific">Ureaplasma parvum serovar 3 (strain ATCC 27815 / 27 / NCTC 11736)</name>
    <dbReference type="NCBI Taxonomy" id="505682"/>
    <lineage>
        <taxon>Bacteria</taxon>
        <taxon>Bacillati</taxon>
        <taxon>Mycoplasmatota</taxon>
        <taxon>Mycoplasmoidales</taxon>
        <taxon>Mycoplasmoidaceae</taxon>
        <taxon>Ureaplasma</taxon>
    </lineage>
</organism>
<feature type="chain" id="PRO_1000074139" description="Recombination protein RecR">
    <location>
        <begin position="1"/>
        <end position="201"/>
    </location>
</feature>
<feature type="domain" description="Toprim" evidence="1">
    <location>
        <begin position="80"/>
        <end position="176"/>
    </location>
</feature>
<feature type="zinc finger region" description="C4-type" evidence="1">
    <location>
        <begin position="57"/>
        <end position="72"/>
    </location>
</feature>
<sequence length="201" mass="23295">MSKPVEFEMLVDALKSLPGVGTKNANKWAFFLLQQDQKYIDDLIKRIKEAKTNILKCKYCANFTNKDECDICLNEYRDFTKLMIVTTNEDLERIESANIYNGLYHITNGEISLRKNVVIEHTNIKTIKERVLNGSFKEIIIATSYTHDGEVTADYIIRMLEDIKDLQIYRIGFGIPLNSSIDYADDETLKQSLINKRKIRN</sequence>
<proteinExistence type="inferred from homology"/>
<keyword id="KW-0227">DNA damage</keyword>
<keyword id="KW-0233">DNA recombination</keyword>
<keyword id="KW-0234">DNA repair</keyword>
<keyword id="KW-0479">Metal-binding</keyword>
<keyword id="KW-0862">Zinc</keyword>
<keyword id="KW-0863">Zinc-finger</keyword>
<evidence type="ECO:0000255" key="1">
    <source>
        <dbReference type="HAMAP-Rule" id="MF_00017"/>
    </source>
</evidence>
<accession>B1AI75</accession>
<protein>
    <recommendedName>
        <fullName evidence="1">Recombination protein RecR</fullName>
    </recommendedName>
</protein>
<comment type="function">
    <text evidence="1">May play a role in DNA repair. It seems to be involved in an RecBC-independent recombinational process of DNA repair. It may act with RecF and RecO.</text>
</comment>
<comment type="similarity">
    <text evidence="1">Belongs to the RecR family.</text>
</comment>
<dbReference type="EMBL" id="CP000942">
    <property type="protein sequence ID" value="ACA33071.1"/>
    <property type="molecule type" value="Genomic_DNA"/>
</dbReference>
<dbReference type="RefSeq" id="WP_006688992.1">
    <property type="nucleotide sequence ID" value="NC_010503.1"/>
</dbReference>
<dbReference type="SMR" id="B1AI75"/>
<dbReference type="GeneID" id="29672204"/>
<dbReference type="KEGG" id="upa:UPA3_0089"/>
<dbReference type="HOGENOM" id="CLU_060739_1_1_14"/>
<dbReference type="Proteomes" id="UP000002162">
    <property type="component" value="Chromosome"/>
</dbReference>
<dbReference type="GO" id="GO:0003677">
    <property type="term" value="F:DNA binding"/>
    <property type="evidence" value="ECO:0007669"/>
    <property type="project" value="UniProtKB-UniRule"/>
</dbReference>
<dbReference type="GO" id="GO:0008270">
    <property type="term" value="F:zinc ion binding"/>
    <property type="evidence" value="ECO:0007669"/>
    <property type="project" value="UniProtKB-KW"/>
</dbReference>
<dbReference type="GO" id="GO:0006310">
    <property type="term" value="P:DNA recombination"/>
    <property type="evidence" value="ECO:0007669"/>
    <property type="project" value="UniProtKB-UniRule"/>
</dbReference>
<dbReference type="GO" id="GO:0006281">
    <property type="term" value="P:DNA repair"/>
    <property type="evidence" value="ECO:0007669"/>
    <property type="project" value="UniProtKB-UniRule"/>
</dbReference>
<dbReference type="CDD" id="cd01025">
    <property type="entry name" value="TOPRIM_recR"/>
    <property type="match status" value="1"/>
</dbReference>
<dbReference type="Gene3D" id="3.40.1360.10">
    <property type="match status" value="1"/>
</dbReference>
<dbReference type="Gene3D" id="1.10.8.420">
    <property type="entry name" value="RecR Domain 1"/>
    <property type="match status" value="1"/>
</dbReference>
<dbReference type="HAMAP" id="MF_00017">
    <property type="entry name" value="RecR"/>
    <property type="match status" value="1"/>
</dbReference>
<dbReference type="InterPro" id="IPR000093">
    <property type="entry name" value="DNA_Rcmb_RecR"/>
</dbReference>
<dbReference type="InterPro" id="IPR023627">
    <property type="entry name" value="Rcmb_RecR"/>
</dbReference>
<dbReference type="InterPro" id="IPR015967">
    <property type="entry name" value="Rcmb_RecR_Znf"/>
</dbReference>
<dbReference type="InterPro" id="IPR006171">
    <property type="entry name" value="TOPRIM_dom"/>
</dbReference>
<dbReference type="InterPro" id="IPR034137">
    <property type="entry name" value="TOPRIM_RecR"/>
</dbReference>
<dbReference type="NCBIfam" id="TIGR00615">
    <property type="entry name" value="recR"/>
    <property type="match status" value="1"/>
</dbReference>
<dbReference type="PANTHER" id="PTHR30446">
    <property type="entry name" value="RECOMBINATION PROTEIN RECR"/>
    <property type="match status" value="1"/>
</dbReference>
<dbReference type="PANTHER" id="PTHR30446:SF0">
    <property type="entry name" value="RECOMBINATION PROTEIN RECR"/>
    <property type="match status" value="1"/>
</dbReference>
<dbReference type="Pfam" id="PF21175">
    <property type="entry name" value="RecR_C"/>
    <property type="match status" value="1"/>
</dbReference>
<dbReference type="Pfam" id="PF21176">
    <property type="entry name" value="RecR_HhH"/>
    <property type="match status" value="1"/>
</dbReference>
<dbReference type="Pfam" id="PF13662">
    <property type="entry name" value="Toprim_4"/>
    <property type="match status" value="1"/>
</dbReference>
<dbReference type="SUPFAM" id="SSF111304">
    <property type="entry name" value="Recombination protein RecR"/>
    <property type="match status" value="1"/>
</dbReference>
<dbReference type="PROSITE" id="PS01300">
    <property type="entry name" value="RECR"/>
    <property type="match status" value="1"/>
</dbReference>
<dbReference type="PROSITE" id="PS50880">
    <property type="entry name" value="TOPRIM"/>
    <property type="match status" value="1"/>
</dbReference>
<reference key="1">
    <citation type="submission" date="2008-02" db="EMBL/GenBank/DDBJ databases">
        <title>Genome sequence of Ureaplasma parvum serovar 3.</title>
        <authorList>
            <person name="Methe B.A."/>
            <person name="Glass J."/>
            <person name="Waites K."/>
            <person name="Shrivastava S."/>
        </authorList>
    </citation>
    <scope>NUCLEOTIDE SEQUENCE [LARGE SCALE GENOMIC DNA]</scope>
    <source>
        <strain>ATCC 27815 / 27 / NCTC 11736</strain>
    </source>
</reference>
<name>RECR_UREP2</name>
<gene>
    <name evidence="1" type="primary">recR</name>
    <name type="ordered locus">UPA3_0089</name>
</gene>